<name>THIY_HALH5</name>
<comment type="function">
    <text evidence="2 3">Participates in a thiamine pyrimidine salvage pathway as part of the ABC transporter complex ThiXYZ involved in the import of thiamine degradation products. Binds the formylaminopyrimidine N-formyl-4-amino-5-aminomethyl-2-methylpyrimidine (FAMP). Does not bind thiamine.</text>
</comment>
<comment type="pathway">
    <text evidence="4">Cofactor biosynthesis; thiamine diphosphate biosynthesis.</text>
</comment>
<comment type="subunit">
    <text evidence="4 5 6">The complex is likely composed of an ATP-binding protein (ThiZ), a transmembrane protein (ThiX) and a solute-binding protein (ThiY).</text>
</comment>
<comment type="subcellular location">
    <subcellularLocation>
        <location evidence="1 5">Cell membrane</location>
        <topology evidence="1 5">Lipid-anchor</topology>
    </subcellularLocation>
</comment>
<comment type="similarity">
    <text evidence="6">Belongs to the NMT1 family.</text>
</comment>
<evidence type="ECO:0000255" key="1">
    <source>
        <dbReference type="PROSITE-ProRule" id="PRU00303"/>
    </source>
</evidence>
<evidence type="ECO:0000269" key="2">
    <source>
    </source>
</evidence>
<evidence type="ECO:0000269" key="3">
    <source>
    </source>
</evidence>
<evidence type="ECO:0000303" key="4">
    <source>
    </source>
</evidence>
<evidence type="ECO:0000303" key="5">
    <source>
    </source>
</evidence>
<evidence type="ECO:0000305" key="6"/>
<evidence type="ECO:0000312" key="7">
    <source>
        <dbReference type="EMBL" id="BAB06401.1"/>
    </source>
</evidence>
<evidence type="ECO:0007744" key="8">
    <source>
        <dbReference type="PDB" id="3IX1"/>
    </source>
</evidence>
<evidence type="ECO:0007829" key="9">
    <source>
        <dbReference type="PDB" id="3IX1"/>
    </source>
</evidence>
<protein>
    <recommendedName>
        <fullName evidence="4">Formylaminopyrimidine-binding protein</fullName>
        <shortName evidence="5">FAMP-binding protein</shortName>
    </recommendedName>
</protein>
<reference key="1">
    <citation type="journal article" date="2000" name="Nucleic Acids Res.">
        <title>Complete genome sequence of the alkaliphilic bacterium Bacillus halodurans and genomic sequence comparison with Bacillus subtilis.</title>
        <authorList>
            <person name="Takami H."/>
            <person name="Nakasone K."/>
            <person name="Takaki Y."/>
            <person name="Maeno G."/>
            <person name="Sasaki R."/>
            <person name="Masui N."/>
            <person name="Fuji F."/>
            <person name="Hirama C."/>
            <person name="Nakamura Y."/>
            <person name="Ogasawara N."/>
            <person name="Kuhara S."/>
            <person name="Horikoshi K."/>
        </authorList>
    </citation>
    <scope>NUCLEOTIDE SEQUENCE [LARGE SCALE GENOMIC DNA]</scope>
    <source>
        <strain>ATCC BAA-125 / DSM 18197 / FERM 7344 / JCM 9153 / C-125</strain>
    </source>
</reference>
<reference key="2">
    <citation type="journal article" date="2007" name="Nat. Chem. Biol.">
        <title>A new thiamin salvage pathway.</title>
        <authorList>
            <person name="Jenkins A.H."/>
            <person name="Schyns G."/>
            <person name="Potot S."/>
            <person name="Sun G."/>
            <person name="Begley T.P."/>
        </authorList>
    </citation>
    <scope>FUNCTION</scope>
    <scope>PATHWAY</scope>
</reference>
<reference key="3">
    <citation type="journal article" date="2010" name="Biochemistry">
        <title>HMP binding protein ThiY and HMP-P synthase THI5 are structural homologues.</title>
        <authorList>
            <person name="Bale S."/>
            <person name="Rajashankar K.R."/>
            <person name="Perry K."/>
            <person name="Begley T.P."/>
            <person name="Ealick S.E."/>
        </authorList>
    </citation>
    <scope>X-RAY CRYSTALLOGRAPHY (2.40 ANGSTROMS) OF 29-330 IN COMPLEX WITH FAMP</scope>
    <scope>FUNCTION</scope>
</reference>
<sequence>MKSFKIISLLLAILFLASCQTNTASDDEALETVEVMLDWYPNAVHTFLYVAIENGYFAEEGLDVDIVFPTNPTDPIQLTASGAIPLALSYQPDVILARSKDLPVVSVASVVRSPLNHVMFLAEQDFDSPADLVGLTVGYPGIPVNEPILKTMVEAAGGDYEQVHLMDVGFELGASIVSGRADAVVGTYINHEYPVLKHEGHDISYFNPVDYGVPEYDELVLISNEAYVEESGEVLAAFWRAALKGYEWMVENPDEALNVLLTNQDEANFPLIQEVEEESLSILLEKMENPNGPFGGQDAESWEEVISWLDAHDWLEQPVVAEDAFSSITD</sequence>
<gene>
    <name evidence="4 5" type="primary">thiY</name>
    <name evidence="7" type="ordered locus">BH2682</name>
</gene>
<feature type="signal peptide" evidence="1">
    <location>
        <begin position="1"/>
        <end position="18"/>
    </location>
</feature>
<feature type="chain" id="PRO_0000431515" description="Formylaminopyrimidine-binding protein">
    <location>
        <begin position="19"/>
        <end position="330"/>
    </location>
</feature>
<feature type="binding site" evidence="3 8">
    <location>
        <begin position="38"/>
        <end position="39"/>
    </location>
    <ligand>
        <name>substrate</name>
    </ligand>
</feature>
<feature type="binding site" evidence="3 8">
    <location>
        <position position="90"/>
    </location>
    <ligand>
        <name>substrate</name>
    </ligand>
</feature>
<feature type="binding site" evidence="3 8">
    <location>
        <position position="145"/>
    </location>
    <ligand>
        <name>substrate</name>
    </ligand>
</feature>
<feature type="binding site" evidence="3 8">
    <location>
        <position position="188"/>
    </location>
    <ligand>
        <name>substrate</name>
    </ligand>
</feature>
<feature type="binding site" evidence="3 8">
    <location>
        <position position="192"/>
    </location>
    <ligand>
        <name>substrate</name>
    </ligand>
</feature>
<feature type="lipid moiety-binding region" description="N-palmitoyl cysteine" evidence="1">
    <location>
        <position position="19"/>
    </location>
</feature>
<feature type="lipid moiety-binding region" description="S-diacylglycerol cysteine" evidence="1">
    <location>
        <position position="19"/>
    </location>
</feature>
<feature type="strand" evidence="9">
    <location>
        <begin position="31"/>
        <end position="36"/>
    </location>
</feature>
<feature type="strand" evidence="9">
    <location>
        <begin position="38"/>
        <end position="40"/>
    </location>
</feature>
<feature type="helix" evidence="9">
    <location>
        <begin position="43"/>
        <end position="45"/>
    </location>
</feature>
<feature type="helix" evidence="9">
    <location>
        <begin position="46"/>
        <end position="53"/>
    </location>
</feature>
<feature type="helix" evidence="9">
    <location>
        <begin position="56"/>
        <end position="59"/>
    </location>
</feature>
<feature type="strand" evidence="9">
    <location>
        <begin position="62"/>
        <end position="67"/>
    </location>
</feature>
<feature type="helix" evidence="9">
    <location>
        <begin position="74"/>
        <end position="81"/>
    </location>
</feature>
<feature type="strand" evidence="9">
    <location>
        <begin position="85"/>
        <end position="89"/>
    </location>
</feature>
<feature type="helix" evidence="9">
    <location>
        <begin position="91"/>
        <end position="99"/>
    </location>
</feature>
<feature type="strand" evidence="9">
    <location>
        <begin position="104"/>
        <end position="111"/>
    </location>
</feature>
<feature type="strand" evidence="9">
    <location>
        <begin position="116"/>
        <end position="121"/>
    </location>
</feature>
<feature type="helix" evidence="9">
    <location>
        <begin position="122"/>
        <end position="124"/>
    </location>
</feature>
<feature type="helix" evidence="9">
    <location>
        <begin position="129"/>
        <end position="132"/>
    </location>
</feature>
<feature type="strand" evidence="9">
    <location>
        <begin position="135"/>
        <end position="139"/>
    </location>
</feature>
<feature type="helix" evidence="9">
    <location>
        <begin position="145"/>
        <end position="155"/>
    </location>
</feature>
<feature type="helix" evidence="9">
    <location>
        <begin position="160"/>
        <end position="162"/>
    </location>
</feature>
<feature type="strand" evidence="9">
    <location>
        <begin position="164"/>
        <end position="167"/>
    </location>
</feature>
<feature type="helix" evidence="9">
    <location>
        <begin position="172"/>
        <end position="178"/>
    </location>
</feature>
<feature type="strand" evidence="9">
    <location>
        <begin position="179"/>
        <end position="188"/>
    </location>
</feature>
<feature type="turn" evidence="9">
    <location>
        <begin position="189"/>
        <end position="191"/>
    </location>
</feature>
<feature type="helix" evidence="9">
    <location>
        <begin position="192"/>
        <end position="198"/>
    </location>
</feature>
<feature type="strand" evidence="9">
    <location>
        <begin position="203"/>
        <end position="206"/>
    </location>
</feature>
<feature type="helix" evidence="9">
    <location>
        <begin position="208"/>
        <end position="210"/>
    </location>
</feature>
<feature type="strand" evidence="9">
    <location>
        <begin position="218"/>
        <end position="224"/>
    </location>
</feature>
<feature type="helix" evidence="9">
    <location>
        <begin position="225"/>
        <end position="230"/>
    </location>
</feature>
<feature type="helix" evidence="9">
    <location>
        <begin position="232"/>
        <end position="251"/>
    </location>
</feature>
<feature type="helix" evidence="9">
    <location>
        <begin position="253"/>
        <end position="262"/>
    </location>
</feature>
<feature type="turn" evidence="9">
    <location>
        <begin position="266"/>
        <end position="268"/>
    </location>
</feature>
<feature type="helix" evidence="9">
    <location>
        <begin position="273"/>
        <end position="287"/>
    </location>
</feature>
<feature type="helix" evidence="9">
    <location>
        <begin position="299"/>
        <end position="311"/>
    </location>
</feature>
<feature type="helix" evidence="9">
    <location>
        <begin position="321"/>
        <end position="324"/>
    </location>
</feature>
<proteinExistence type="evidence at protein level"/>
<organism>
    <name type="scientific">Halalkalibacterium halodurans (strain ATCC BAA-125 / DSM 18197 / FERM 7344 / JCM 9153 / C-125)</name>
    <name type="common">Bacillus halodurans</name>
    <dbReference type="NCBI Taxonomy" id="272558"/>
    <lineage>
        <taxon>Bacteria</taxon>
        <taxon>Bacillati</taxon>
        <taxon>Bacillota</taxon>
        <taxon>Bacilli</taxon>
        <taxon>Bacillales</taxon>
        <taxon>Bacillaceae</taxon>
        <taxon>Halalkalibacterium (ex Joshi et al. 2022)</taxon>
    </lineage>
</organism>
<dbReference type="EMBL" id="BA000004">
    <property type="protein sequence ID" value="BAB06401.1"/>
    <property type="molecule type" value="Genomic_DNA"/>
</dbReference>
<dbReference type="PIR" id="B83985">
    <property type="entry name" value="B83985"/>
</dbReference>
<dbReference type="RefSeq" id="WP_010898831.1">
    <property type="nucleotide sequence ID" value="NC_002570.2"/>
</dbReference>
<dbReference type="PDB" id="3IX1">
    <property type="method" value="X-ray"/>
    <property type="resolution" value="2.40 A"/>
    <property type="chains" value="A/B=29-330"/>
</dbReference>
<dbReference type="PDBsum" id="3IX1"/>
<dbReference type="SMR" id="Q9K9G5"/>
<dbReference type="STRING" id="272558.gene:10728580"/>
<dbReference type="KEGG" id="bha:BH2682"/>
<dbReference type="eggNOG" id="COG0715">
    <property type="taxonomic scope" value="Bacteria"/>
</dbReference>
<dbReference type="HOGENOM" id="CLU_028871_6_2_9"/>
<dbReference type="OrthoDB" id="9815602at2"/>
<dbReference type="UniPathway" id="UPA00060"/>
<dbReference type="EvolutionaryTrace" id="Q9K9G5"/>
<dbReference type="Proteomes" id="UP000001258">
    <property type="component" value="Chromosome"/>
</dbReference>
<dbReference type="GO" id="GO:0005886">
    <property type="term" value="C:plasma membrane"/>
    <property type="evidence" value="ECO:0007669"/>
    <property type="project" value="UniProtKB-SubCell"/>
</dbReference>
<dbReference type="GO" id="GO:0009228">
    <property type="term" value="P:thiamine biosynthetic process"/>
    <property type="evidence" value="ECO:0007669"/>
    <property type="project" value="InterPro"/>
</dbReference>
<dbReference type="GO" id="GO:0009229">
    <property type="term" value="P:thiamine diphosphate biosynthetic process"/>
    <property type="evidence" value="ECO:0007669"/>
    <property type="project" value="UniProtKB-UniPathway"/>
</dbReference>
<dbReference type="CDD" id="cd13651">
    <property type="entry name" value="PBP2_ThiY"/>
    <property type="match status" value="1"/>
</dbReference>
<dbReference type="Gene3D" id="3.40.190.10">
    <property type="entry name" value="Periplasmic binding protein-like II"/>
    <property type="match status" value="2"/>
</dbReference>
<dbReference type="InterPro" id="IPR027939">
    <property type="entry name" value="NMT1/THI5"/>
</dbReference>
<dbReference type="InterPro" id="IPR015168">
    <property type="entry name" value="SsuA/THI5"/>
</dbReference>
<dbReference type="PANTHER" id="PTHR31528">
    <property type="entry name" value="4-AMINO-5-HYDROXYMETHYL-2-METHYLPYRIMIDINE PHOSPHATE SYNTHASE THI11-RELATED"/>
    <property type="match status" value="1"/>
</dbReference>
<dbReference type="PANTHER" id="PTHR31528:SF3">
    <property type="entry name" value="THIAMINE BIOSYNTHESIS PROTEIN HI_0357-RELATED"/>
    <property type="match status" value="1"/>
</dbReference>
<dbReference type="Pfam" id="PF09084">
    <property type="entry name" value="NMT1"/>
    <property type="match status" value="1"/>
</dbReference>
<dbReference type="SUPFAM" id="SSF53850">
    <property type="entry name" value="Periplasmic binding protein-like II"/>
    <property type="match status" value="1"/>
</dbReference>
<dbReference type="PROSITE" id="PS51257">
    <property type="entry name" value="PROKAR_LIPOPROTEIN"/>
    <property type="match status" value="1"/>
</dbReference>
<accession>Q9K9G5</accession>
<keyword id="KW-0002">3D-structure</keyword>
<keyword id="KW-1003">Cell membrane</keyword>
<keyword id="KW-0449">Lipoprotein</keyword>
<keyword id="KW-0472">Membrane</keyword>
<keyword id="KW-0564">Palmitate</keyword>
<keyword id="KW-1185">Reference proteome</keyword>
<keyword id="KW-0732">Signal</keyword>
<keyword id="KW-0813">Transport</keyword>